<dbReference type="EC" id="3.1.1.31" evidence="5"/>
<dbReference type="EC" id="1.1.1.49" evidence="5"/>
<dbReference type="EMBL" id="LN999946">
    <property type="protein sequence ID" value="CZU00233.1"/>
    <property type="molecule type" value="Genomic_DNA"/>
</dbReference>
<dbReference type="PIR" id="S40259">
    <property type="entry name" value="S40259"/>
</dbReference>
<dbReference type="PIR" id="S47533">
    <property type="entry name" value="S47533"/>
</dbReference>
<dbReference type="RefSeq" id="XP_001348685.1">
    <property type="nucleotide sequence ID" value="XM_001348649.2"/>
</dbReference>
<dbReference type="SMR" id="Q8IKU0"/>
<dbReference type="FunCoup" id="Q8IKU0">
    <property type="interactions" value="131"/>
</dbReference>
<dbReference type="STRING" id="36329.Q8IKU0"/>
<dbReference type="BindingDB" id="Q8IKU0"/>
<dbReference type="ChEMBL" id="CHEMBL4295620"/>
<dbReference type="PaxDb" id="5833-PF14_0511"/>
<dbReference type="EnsemblProtists" id="CZU00233">
    <property type="protein sequence ID" value="CZU00233"/>
    <property type="gene ID" value="PF3D7_1453800"/>
</dbReference>
<dbReference type="GeneID" id="812093"/>
<dbReference type="KEGG" id="pfa:PF3D7_1453800"/>
<dbReference type="VEuPathDB" id="PlasmoDB:PF3D7_1453800"/>
<dbReference type="HOGENOM" id="CLU_013524_3_0_1"/>
<dbReference type="InParanoid" id="Q8IKU0"/>
<dbReference type="OMA" id="MYNNEFV"/>
<dbReference type="OrthoDB" id="60984at2759"/>
<dbReference type="PhylomeDB" id="Q8IKU0"/>
<dbReference type="BRENDA" id="1.1.1.49">
    <property type="organism ID" value="4889"/>
</dbReference>
<dbReference type="BRENDA" id="3.1.1.31">
    <property type="organism ID" value="4889"/>
</dbReference>
<dbReference type="Reactome" id="R-PFA-5628897">
    <property type="pathway name" value="TP53 Regulates Metabolic Genes"/>
</dbReference>
<dbReference type="Reactome" id="R-PFA-71336">
    <property type="pathway name" value="Pentose phosphate pathway"/>
</dbReference>
<dbReference type="UniPathway" id="UPA00115">
    <property type="reaction ID" value="UER00408"/>
</dbReference>
<dbReference type="UniPathway" id="UPA00115">
    <property type="reaction ID" value="UER00409"/>
</dbReference>
<dbReference type="Proteomes" id="UP000001450">
    <property type="component" value="Chromosome 14"/>
</dbReference>
<dbReference type="GO" id="GO:0017057">
    <property type="term" value="F:6-phosphogluconolactonase activity"/>
    <property type="evidence" value="ECO:0000250"/>
    <property type="project" value="GeneDB"/>
</dbReference>
<dbReference type="GO" id="GO:0004345">
    <property type="term" value="F:glucose-6-phosphate dehydrogenase activity"/>
    <property type="evidence" value="ECO:0000318"/>
    <property type="project" value="GO_Central"/>
</dbReference>
<dbReference type="GO" id="GO:0050661">
    <property type="term" value="F:NADP binding"/>
    <property type="evidence" value="ECO:0007669"/>
    <property type="project" value="InterPro"/>
</dbReference>
<dbReference type="GO" id="GO:0051156">
    <property type="term" value="P:glucose 6-phosphate metabolic process"/>
    <property type="evidence" value="ECO:0000304"/>
    <property type="project" value="GeneDB"/>
</dbReference>
<dbReference type="GO" id="GO:0006006">
    <property type="term" value="P:glucose metabolic process"/>
    <property type="evidence" value="ECO:0000318"/>
    <property type="project" value="GO_Central"/>
</dbReference>
<dbReference type="GO" id="GO:0006098">
    <property type="term" value="P:pentose-phosphate shunt"/>
    <property type="evidence" value="ECO:0000304"/>
    <property type="project" value="GeneDB"/>
</dbReference>
<dbReference type="GO" id="GO:0009051">
    <property type="term" value="P:pentose-phosphate shunt, oxidative branch"/>
    <property type="evidence" value="ECO:0000318"/>
    <property type="project" value="GO_Central"/>
</dbReference>
<dbReference type="FunFam" id="3.40.50.1360:FF:000020">
    <property type="entry name" value="Glucose-6-phosphate dehydrogenase"/>
    <property type="match status" value="1"/>
</dbReference>
<dbReference type="Gene3D" id="3.40.50.1360">
    <property type="match status" value="1"/>
</dbReference>
<dbReference type="Gene3D" id="3.30.360.10">
    <property type="entry name" value="Dihydrodipicolinate Reductase, domain 2"/>
    <property type="match status" value="1"/>
</dbReference>
<dbReference type="Gene3D" id="3.40.50.720">
    <property type="entry name" value="NAD(P)-binding Rossmann-like Domain"/>
    <property type="match status" value="1"/>
</dbReference>
<dbReference type="HAMAP" id="MF_00966">
    <property type="entry name" value="G6PD"/>
    <property type="match status" value="1"/>
</dbReference>
<dbReference type="InterPro" id="IPR001282">
    <property type="entry name" value="G6P_DH"/>
</dbReference>
<dbReference type="InterPro" id="IPR022675">
    <property type="entry name" value="G6P_DH_C"/>
</dbReference>
<dbReference type="InterPro" id="IPR022674">
    <property type="entry name" value="G6P_DH_NAD-bd"/>
</dbReference>
<dbReference type="InterPro" id="IPR006148">
    <property type="entry name" value="Glc/Gal-6P_isomerase"/>
</dbReference>
<dbReference type="InterPro" id="IPR036291">
    <property type="entry name" value="NAD(P)-bd_dom_sf"/>
</dbReference>
<dbReference type="InterPro" id="IPR037171">
    <property type="entry name" value="NagB/RpiA_transferase-like"/>
</dbReference>
<dbReference type="PANTHER" id="PTHR23429:SF0">
    <property type="entry name" value="GLUCOSE-6-PHOSPHATE 1-DEHYDROGENASE"/>
    <property type="match status" value="1"/>
</dbReference>
<dbReference type="PANTHER" id="PTHR23429">
    <property type="entry name" value="GLUCOSE-6-PHOSPHATE 1-DEHYDROGENASE G6PD"/>
    <property type="match status" value="1"/>
</dbReference>
<dbReference type="Pfam" id="PF02781">
    <property type="entry name" value="G6PD_C"/>
    <property type="match status" value="1"/>
</dbReference>
<dbReference type="Pfam" id="PF00479">
    <property type="entry name" value="G6PD_N"/>
    <property type="match status" value="2"/>
</dbReference>
<dbReference type="Pfam" id="PF01182">
    <property type="entry name" value="Glucosamine_iso"/>
    <property type="match status" value="1"/>
</dbReference>
<dbReference type="PRINTS" id="PR00079">
    <property type="entry name" value="G6PDHDRGNASE"/>
</dbReference>
<dbReference type="SUPFAM" id="SSF55347">
    <property type="entry name" value="Glyceraldehyde-3-phosphate dehydrogenase-like, C-terminal domain"/>
    <property type="match status" value="1"/>
</dbReference>
<dbReference type="SUPFAM" id="SSF51735">
    <property type="entry name" value="NAD(P)-binding Rossmann-fold domains"/>
    <property type="match status" value="2"/>
</dbReference>
<dbReference type="SUPFAM" id="SSF100950">
    <property type="entry name" value="NagB/RpiA/CoA transferase-like"/>
    <property type="match status" value="1"/>
</dbReference>
<name>GLUPH_PLAF7</name>
<accession>Q8IKU0</accession>
<accession>A0A144A6N0</accession>
<organism>
    <name type="scientific">Plasmodium falciparum (isolate 3D7)</name>
    <dbReference type="NCBI Taxonomy" id="36329"/>
    <lineage>
        <taxon>Eukaryota</taxon>
        <taxon>Sar</taxon>
        <taxon>Alveolata</taxon>
        <taxon>Apicomplexa</taxon>
        <taxon>Aconoidasida</taxon>
        <taxon>Haemosporida</taxon>
        <taxon>Plasmodiidae</taxon>
        <taxon>Plasmodium</taxon>
        <taxon>Plasmodium (Laverania)</taxon>
    </lineage>
</organism>
<evidence type="ECO:0000250" key="1">
    <source>
        <dbReference type="UniProtKB" id="P11411"/>
    </source>
</evidence>
<evidence type="ECO:0000250" key="2">
    <source>
        <dbReference type="UniProtKB" id="P11413"/>
    </source>
</evidence>
<evidence type="ECO:0000255" key="3"/>
<evidence type="ECO:0000256" key="4">
    <source>
        <dbReference type="SAM" id="MobiDB-lite"/>
    </source>
</evidence>
<evidence type="ECO:0000269" key="5">
    <source>
    </source>
</evidence>
<evidence type="ECO:0000303" key="6">
    <source>
    </source>
</evidence>
<evidence type="ECO:0000305" key="7"/>
<reference key="1">
    <citation type="journal article" date="2002" name="Nature">
        <title>Genome sequence of the human malaria parasite Plasmodium falciparum.</title>
        <authorList>
            <person name="Gardner M.J."/>
            <person name="Hall N."/>
            <person name="Fung E."/>
            <person name="White O."/>
            <person name="Berriman M."/>
            <person name="Hyman R.W."/>
            <person name="Carlton J.M."/>
            <person name="Pain A."/>
            <person name="Nelson K.E."/>
            <person name="Bowman S."/>
            <person name="Paulsen I.T."/>
            <person name="James K.D."/>
            <person name="Eisen J.A."/>
            <person name="Rutherford K.M."/>
            <person name="Salzberg S.L."/>
            <person name="Craig A."/>
            <person name="Kyes S."/>
            <person name="Chan M.-S."/>
            <person name="Nene V."/>
            <person name="Shallom S.J."/>
            <person name="Suh B."/>
            <person name="Peterson J."/>
            <person name="Angiuoli S."/>
            <person name="Pertea M."/>
            <person name="Allen J."/>
            <person name="Selengut J."/>
            <person name="Haft D."/>
            <person name="Mather M.W."/>
            <person name="Vaidya A.B."/>
            <person name="Martin D.M.A."/>
            <person name="Fairlamb A.H."/>
            <person name="Fraunholz M.J."/>
            <person name="Roos D.S."/>
            <person name="Ralph S.A."/>
            <person name="McFadden G.I."/>
            <person name="Cummings L.M."/>
            <person name="Subramanian G.M."/>
            <person name="Mungall C."/>
            <person name="Venter J.C."/>
            <person name="Carucci D.J."/>
            <person name="Hoffman S.L."/>
            <person name="Newbold C."/>
            <person name="Davis R.W."/>
            <person name="Fraser C.M."/>
            <person name="Barrell B.G."/>
        </authorList>
    </citation>
    <scope>NUCLEOTIDE SEQUENCE [LARGE SCALE GENOMIC DNA]</scope>
    <source>
        <strain>3D7</strain>
    </source>
</reference>
<reference evidence="7" key="2">
    <citation type="journal article" date="2011" name="Biochem. J.">
        <title>Glucose-6-phosphate dehydrogenase-6-phosphogluconolactonase: a unique bifunctional enzyme from Plasmodium falciparum.</title>
        <authorList>
            <person name="Jortzik E."/>
            <person name="Mailu B.M."/>
            <person name="Preuss J."/>
            <person name="Fischer M."/>
            <person name="Bode L."/>
            <person name="Rahlfs S."/>
            <person name="Becker K."/>
        </authorList>
    </citation>
    <scope>FUNCTION</scope>
    <scope>CATALYTIC ACTIVITY</scope>
    <scope>ACTIVITY REGULATION</scope>
    <scope>BIOPHYSICOCHEMICAL PROPERTIES</scope>
    <scope>SUBUNIT</scope>
    <source>
        <strain evidence="5">3D7</strain>
    </source>
</reference>
<comment type="function">
    <text evidence="5">Bifunctional enzyme which catalyzes the first two steps of the oxidative pentose-phosphate pathway, which represents a route for the dissimilation of carbohydrates besides glycolysis. The main function of this enzyme is to provide reducing power (NADPH) and pentose phosphates for fatty acid and nucleic acid synthesis.</text>
</comment>
<comment type="catalytic activity">
    <reaction evidence="5">
        <text>6-phospho-D-glucono-1,5-lactone + H2O = 6-phospho-D-gluconate + H(+)</text>
        <dbReference type="Rhea" id="RHEA:12556"/>
        <dbReference type="ChEBI" id="CHEBI:15377"/>
        <dbReference type="ChEBI" id="CHEBI:15378"/>
        <dbReference type="ChEBI" id="CHEBI:57955"/>
        <dbReference type="ChEBI" id="CHEBI:58759"/>
        <dbReference type="EC" id="3.1.1.31"/>
    </reaction>
</comment>
<comment type="catalytic activity">
    <reaction evidence="5">
        <text>D-glucose 6-phosphate + NADP(+) = 6-phospho-D-glucono-1,5-lactone + NADPH + H(+)</text>
        <dbReference type="Rhea" id="RHEA:15841"/>
        <dbReference type="ChEBI" id="CHEBI:15378"/>
        <dbReference type="ChEBI" id="CHEBI:57783"/>
        <dbReference type="ChEBI" id="CHEBI:57955"/>
        <dbReference type="ChEBI" id="CHEBI:58349"/>
        <dbReference type="ChEBI" id="CHEBI:61548"/>
        <dbReference type="EC" id="1.1.1.49"/>
    </reaction>
</comment>
<comment type="activity regulation">
    <text evidence="5">G6PD activity is inhibited by glucosamine-6-phosphate, NADPH, and 4-(4-bromophenyl)-7-(3,4-dimethoxyphenyl)-4,6,7,8-tetrahydroquinoline-2,5(1 H,3H)-dione. G6PD and 6PGL activities can be reversibly inhibited by S-glutathionylation (in vitro).</text>
</comment>
<comment type="biophysicochemical properties">
    <kinetics>
        <KM evidence="5">19.2 uM for glucose-6-phosphate (at 25 degrees Celsius)</KM>
        <KM evidence="5">6.5 uM for NADP(+) (at 25 degrees Celsius)</KM>
        <KM evidence="5">172 uM for 6-phosphoglucono-gamma-lactone (at 25 degrees Celsius)</KM>
        <Vmax evidence="5">5.2 umol/min/mg enzyme towards glucose-6-phosphate (at 25 degrees Celsius)</Vmax>
        <Vmax evidence="5">4.6 umol/min/mg enzyme towards NADP(+) (at 25 degrees Celsius)</Vmax>
        <Vmax evidence="5">46.6 umol/min/mg enzyme with 6-phosphoglucono-gamma-lactone as substrate (at 25 degrees Celsius)</Vmax>
    </kinetics>
    <phDependence>
        <text evidence="5">Optimum pH is 8.0 for G6PD activity.</text>
    </phDependence>
</comment>
<comment type="pathway">
    <text evidence="5">Carbohydrate degradation; pentose phosphate pathway; D-ribulose 5-phosphate from D-glucose 6-phosphate (oxidative stage): step 1/3.</text>
</comment>
<comment type="pathway">
    <text evidence="5">Carbohydrate degradation; pentose phosphate pathway; D-ribulose 5-phosphate from D-glucose 6-phosphate (oxidative stage): step 2/3.</text>
</comment>
<comment type="subunit">
    <text evidence="5">Homotetramer.</text>
</comment>
<comment type="similarity">
    <text evidence="3">In the N-terminal section; belongs to the glucosamine/galactosamine-6-phosphate isomerase family. 6-phosphogluconolactonase subfamily.</text>
</comment>
<comment type="similarity">
    <text evidence="3">In the C-terminal section; belongs to the glucose-6-phosphate dehydrogenase family.</text>
</comment>
<sequence length="910" mass="106987">MDYENFVKSAEEINNLHNVNYLETKDLNDFNWKAAYYICKEIYDKQQINKDGYVVIGLSGGRTPIDVYKNMCLIKDIKIDKSKLIFFIIDERYKSDDHKFSNYNNIKFLFHNLNINEKEQLYKPDTTKSIVDCILDYNDKIKIMIEKYKKVDIAILGMGSDFHIASLFPNIFYNIYMNNYQNNYIYNEKTLDFINNDQDNDNLKYLKEYVYFTTTNQFDVRKRITVSLNLLANASSKIFLLNSKDKLDLWKNMLIKSYIEVNYNLYPATYLIDTSCTNENVNINNNNNNNNKNKNNYCYSNTTVISCGYENYTKSIEEIYDSKYALSLYSNSLNKEELLTIIIFGCSGDLAKKKIYPALFKLFCNNSLPKDLLIIGFARTVQDFDTFFDKIVIYLKRCLLCYEDWSISKKKDLLNGFKNRCRYFVGNYSSSESFENFNKYLTTIEEEEAKKKYYATCYKMNGSDYNISNNVAEDNISIDDENKTNEYFQMCTPKNCPDNVFSSNYNFPYVINRMLYLALPPHIFVSTLKNYKKNCLNSKGTDKILLEKPFGNDLDSFKMLSKQILENFNEQQIYRIDHYLGKDMVSGLLKLKFTNTFLLSLMNRHFIKCIKITLKETKGVYGRGQYFDPYGIIRDVMQNHMLQLLTLITMEDPIDLNDESVKNEKIKILKSIPSIKLEDTIIGQYEKAENFKEDENNDDESKKNHSYHDDPHIDKNSITPTFCTCILYINSINWYGVPIIFKSGKGLNKDICEIRIQFHNIMGSSDENMNNNEFVIILQPVEAIYLKMMIKKTGCEEMEEVQLNLTVNEKNKKINVPEAYETLLLECFKGHKKKFISDEELYESWRIFTPLLKELQEKQVKPLKYSFGSSGPKEVFGLVKKYYNYGKNYTHRPEFVRKSSFYEDDLLDIN</sequence>
<feature type="chain" id="PRO_0000424558" description="Bifunctional glucose-6-phosphate 1-dehydrogenase/6-phosphogluconolactonase">
    <location>
        <begin position="1"/>
        <end position="910"/>
    </location>
</feature>
<feature type="region of interest" description="6-phosphogluconolactonase" evidence="3">
    <location>
        <begin position="1"/>
        <end position="170"/>
    </location>
</feature>
<feature type="region of interest" description="Linker" evidence="3">
    <location>
        <begin position="171"/>
        <end position="276"/>
    </location>
</feature>
<feature type="region of interest" description="Glucose-6-phosphate 1-dehydrogenase" evidence="3">
    <location>
        <begin position="277"/>
        <end position="910"/>
    </location>
</feature>
<feature type="region of interest" description="Disordered" evidence="4">
    <location>
        <begin position="689"/>
        <end position="711"/>
    </location>
</feature>
<feature type="active site" description="Proton acceptor" evidence="1">
    <location>
        <position position="640"/>
    </location>
</feature>
<feature type="binding site" evidence="2">
    <location>
        <begin position="345"/>
        <end position="352"/>
    </location>
    <ligand>
        <name>NADP(+)</name>
        <dbReference type="ChEBI" id="CHEBI:58349"/>
        <label>1</label>
    </ligand>
</feature>
<feature type="binding site" evidence="2">
    <location>
        <position position="379"/>
    </location>
    <ligand>
        <name>NADP(+)</name>
        <dbReference type="ChEBI" id="CHEBI:58349"/>
        <label>1</label>
    </ligand>
</feature>
<feature type="binding site" evidence="2">
    <location>
        <position position="548"/>
    </location>
    <ligand>
        <name>D-glucose 6-phosphate</name>
        <dbReference type="ChEBI" id="CHEBI:61548"/>
    </ligand>
</feature>
<feature type="binding site" evidence="2">
    <location>
        <position position="548"/>
    </location>
    <ligand>
        <name>NADP(+)</name>
        <dbReference type="ChEBI" id="CHEBI:58349"/>
        <label>1</label>
    </ligand>
</feature>
<feature type="binding site" evidence="2">
    <location>
        <begin position="578"/>
        <end position="582"/>
    </location>
    <ligand>
        <name>D-glucose 6-phosphate</name>
        <dbReference type="ChEBI" id="CHEBI:61548"/>
    </ligand>
</feature>
<feature type="binding site" evidence="2">
    <location>
        <position position="616"/>
    </location>
    <ligand>
        <name>D-glucose 6-phosphate</name>
        <dbReference type="ChEBI" id="CHEBI:61548"/>
    </ligand>
</feature>
<feature type="binding site" evidence="2">
    <location>
        <position position="635"/>
    </location>
    <ligand>
        <name>D-glucose 6-phosphate</name>
        <dbReference type="ChEBI" id="CHEBI:61548"/>
    </ligand>
</feature>
<feature type="binding site" evidence="2">
    <location>
        <position position="742"/>
    </location>
    <ligand>
        <name>NADP(+)</name>
        <dbReference type="ChEBI" id="CHEBI:58349"/>
        <label>2</label>
    </ligand>
</feature>
<feature type="binding site" evidence="2">
    <location>
        <position position="745"/>
    </location>
    <ligand>
        <name>D-glucose 6-phosphate</name>
        <dbReference type="ChEBI" id="CHEBI:61548"/>
    </ligand>
</feature>
<feature type="binding site" evidence="2">
    <location>
        <position position="755"/>
    </location>
    <ligand>
        <name>NADP(+)</name>
        <dbReference type="ChEBI" id="CHEBI:58349"/>
        <label>2</label>
    </ligand>
</feature>
<feature type="binding site" evidence="2">
    <location>
        <position position="779"/>
    </location>
    <ligand>
        <name>D-glucose 6-phosphate</name>
        <dbReference type="ChEBI" id="CHEBI:61548"/>
    </ligand>
</feature>
<feature type="binding site" evidence="2">
    <location>
        <begin position="785"/>
        <end position="787"/>
    </location>
    <ligand>
        <name>NADP(+)</name>
        <dbReference type="ChEBI" id="CHEBI:58349"/>
        <label>2</label>
    </ligand>
</feature>
<proteinExistence type="evidence at protein level"/>
<protein>
    <recommendedName>
        <fullName evidence="6">Bifunctional glucose-6-phosphate 1-dehydrogenase/6-phosphogluconolactonase</fullName>
        <shortName evidence="6">PfGluPho</shortName>
    </recommendedName>
    <domain>
        <recommendedName>
            <fullName evidence="6">6-phosphogluconolactonase</fullName>
            <shortName evidence="6">6PGL</shortName>
            <ecNumber evidence="5">3.1.1.31</ecNumber>
        </recommendedName>
    </domain>
    <domain>
        <recommendedName>
            <fullName evidence="6">Glucose-6-phosphate 1-dehydrogenase</fullName>
            <shortName evidence="6">G6PD</shortName>
            <ecNumber evidence="5">1.1.1.49</ecNumber>
        </recommendedName>
    </domain>
</protein>
<gene>
    <name evidence="7" type="primary">GluPho</name>
    <name type="ORF">PF14_0511</name>
    <name type="ORF">PF3D7_1453800</name>
</gene>
<keyword id="KW-0119">Carbohydrate metabolism</keyword>
<keyword id="KW-0313">Glucose metabolism</keyword>
<keyword id="KW-0318">Glutathionylation</keyword>
<keyword id="KW-0378">Hydrolase</keyword>
<keyword id="KW-0511">Multifunctional enzyme</keyword>
<keyword id="KW-0521">NADP</keyword>
<keyword id="KW-0560">Oxidoreductase</keyword>
<keyword id="KW-1185">Reference proteome</keyword>